<proteinExistence type="inferred from homology"/>
<keyword id="KW-0963">Cytoplasm</keyword>
<keyword id="KW-0489">Methyltransferase</keyword>
<keyword id="KW-0496">Mitochondrion</keyword>
<keyword id="KW-0539">Nucleus</keyword>
<keyword id="KW-1185">Reference proteome</keyword>
<keyword id="KW-0949">S-adenosyl-L-methionine</keyword>
<keyword id="KW-0808">Transferase</keyword>
<keyword id="KW-0819">tRNA processing</keyword>
<evidence type="ECO:0000255" key="1">
    <source>
        <dbReference type="HAMAP-Rule" id="MF_03152"/>
    </source>
</evidence>
<evidence type="ECO:0000305" key="2"/>
<sequence length="360" mass="41015">MDVMDDVKSVLCLKALEASNERASDCIQRAGASIRKIPRIPSIIRVKKKYSTFRVLTDTSHDLLVLVNEGFSDGEYVPINVELELCYEYFTYSEVLRRILPEEVQTPSSFEIVGSIVHLNLDGEQMKHKNIIGRVVHDKTGKTVITKIGQISNAYRSFDLEVIGGDPVLETIHREGDILFCIDYRSVYWCSKLQSERAILAGKFKAGEVLCDPFCGVGPVSLPALKKGCRVYSNDLNLRAIECLEKSIKINRLDPRNIEIFNLSANEFLEKMAGRKIDHFFLNLPEHSLDYLRRISAWEGNPLVHCYFFCRSNEDVVQYIFSRTGLRVDPGMLKVVRKVSPSKYMYKLETSSLFLRRGLG</sequence>
<comment type="function">
    <text evidence="1">Specifically methylates the N1 position of guanosine-37 in various cytoplasmic and mitochondrial tRNAs. Methylation is not dependent on the nature of the nucleoside 5' of the target nucleoside. This is the first step in the biosynthesis of wybutosine (yW), a modified base adjacent to the anticodon of tRNAs and required for accurate decoding.</text>
</comment>
<comment type="catalytic activity">
    <reaction evidence="1">
        <text>guanosine(37) in tRNA + S-adenosyl-L-methionine = N(1)-methylguanosine(37) in tRNA + S-adenosyl-L-homocysteine + H(+)</text>
        <dbReference type="Rhea" id="RHEA:36899"/>
        <dbReference type="Rhea" id="RHEA-COMP:10145"/>
        <dbReference type="Rhea" id="RHEA-COMP:10147"/>
        <dbReference type="ChEBI" id="CHEBI:15378"/>
        <dbReference type="ChEBI" id="CHEBI:57856"/>
        <dbReference type="ChEBI" id="CHEBI:59789"/>
        <dbReference type="ChEBI" id="CHEBI:73542"/>
        <dbReference type="ChEBI" id="CHEBI:74269"/>
        <dbReference type="EC" id="2.1.1.228"/>
    </reaction>
</comment>
<comment type="subunit">
    <text evidence="1">Monomer.</text>
</comment>
<comment type="subcellular location">
    <subcellularLocation>
        <location evidence="1">Mitochondrion matrix</location>
    </subcellularLocation>
    <subcellularLocation>
        <location evidence="1">Nucleus</location>
    </subcellularLocation>
    <subcellularLocation>
        <location evidence="1">Cytoplasm</location>
    </subcellularLocation>
    <text evidence="1">Predominantly in the mitochondria and in the nucleus.</text>
</comment>
<comment type="similarity">
    <text evidence="2">Belongs to the class I-like SAM-binding methyltransferase superfamily. TRM5/TYW2 family.</text>
</comment>
<protein>
    <recommendedName>
        <fullName evidence="1">tRNA (guanine(37)-N(1))-methyltransferase</fullName>
        <ecNumber evidence="1">2.1.1.228</ecNumber>
    </recommendedName>
    <alternativeName>
        <fullName evidence="1">M1G-methyltransferase</fullName>
    </alternativeName>
    <alternativeName>
        <fullName evidence="1">tRNA [GM37] methyltransferase</fullName>
    </alternativeName>
    <alternativeName>
        <fullName evidence="1">tRNA methyltransferase 5</fullName>
    </alternativeName>
</protein>
<feature type="chain" id="PRO_0000414165" description="tRNA (guanine(37)-N(1))-methyltransferase">
    <location>
        <begin position="1"/>
        <end position="360"/>
    </location>
</feature>
<feature type="binding site" evidence="1">
    <location>
        <position position="197"/>
    </location>
    <ligand>
        <name>S-adenosyl-L-methionine</name>
        <dbReference type="ChEBI" id="CHEBI:59789"/>
    </ligand>
</feature>
<feature type="binding site" evidence="1">
    <location>
        <begin position="235"/>
        <end position="236"/>
    </location>
    <ligand>
        <name>S-adenosyl-L-methionine</name>
        <dbReference type="ChEBI" id="CHEBI:59789"/>
    </ligand>
</feature>
<feature type="binding site" evidence="1">
    <location>
        <position position="283"/>
    </location>
    <ligand>
        <name>S-adenosyl-L-methionine</name>
        <dbReference type="ChEBI" id="CHEBI:59789"/>
    </ligand>
</feature>
<accession>Q8SVV3</accession>
<dbReference type="EC" id="2.1.1.228" evidence="1"/>
<dbReference type="EMBL" id="AL590444">
    <property type="protein sequence ID" value="CAD25249.1"/>
    <property type="molecule type" value="Genomic_DNA"/>
</dbReference>
<dbReference type="RefSeq" id="NP_584745.1">
    <property type="nucleotide sequence ID" value="NM_001041095.1"/>
</dbReference>
<dbReference type="SMR" id="Q8SVV3"/>
<dbReference type="FunCoup" id="Q8SVV3">
    <property type="interactions" value="125"/>
</dbReference>
<dbReference type="STRING" id="284813.Q8SVV3"/>
<dbReference type="GeneID" id="858893"/>
<dbReference type="KEGG" id="ecu:ECU04_0620"/>
<dbReference type="VEuPathDB" id="MicrosporidiaDB:ECU04_0620"/>
<dbReference type="HOGENOM" id="CLU_022610_2_0_1"/>
<dbReference type="InParanoid" id="Q8SVV3"/>
<dbReference type="OMA" id="VGSHSQF"/>
<dbReference type="OrthoDB" id="408788at2759"/>
<dbReference type="Proteomes" id="UP000000819">
    <property type="component" value="Chromosome IV"/>
</dbReference>
<dbReference type="GO" id="GO:0005759">
    <property type="term" value="C:mitochondrial matrix"/>
    <property type="evidence" value="ECO:0007669"/>
    <property type="project" value="UniProtKB-SubCell"/>
</dbReference>
<dbReference type="GO" id="GO:0005634">
    <property type="term" value="C:nucleus"/>
    <property type="evidence" value="ECO:0007669"/>
    <property type="project" value="UniProtKB-SubCell"/>
</dbReference>
<dbReference type="GO" id="GO:0052906">
    <property type="term" value="F:tRNA (guanine(37)-N1)-methyltransferase activity"/>
    <property type="evidence" value="ECO:0007669"/>
    <property type="project" value="UniProtKB-UniRule"/>
</dbReference>
<dbReference type="GO" id="GO:0002939">
    <property type="term" value="P:tRNA N1-guanine methylation"/>
    <property type="evidence" value="ECO:0007669"/>
    <property type="project" value="TreeGrafter"/>
</dbReference>
<dbReference type="CDD" id="cd02440">
    <property type="entry name" value="AdoMet_MTases"/>
    <property type="match status" value="1"/>
</dbReference>
<dbReference type="FunFam" id="3.30.300.110:FF:000001">
    <property type="entry name" value="tRNA (guanine(37)-N1)-methyltransferase"/>
    <property type="match status" value="1"/>
</dbReference>
<dbReference type="Gene3D" id="3.30.300.110">
    <property type="entry name" value="Met-10+ protein-like domains"/>
    <property type="match status" value="1"/>
</dbReference>
<dbReference type="Gene3D" id="3.40.50.150">
    <property type="entry name" value="Vaccinia Virus protein VP39"/>
    <property type="match status" value="1"/>
</dbReference>
<dbReference type="HAMAP" id="MF_03152">
    <property type="entry name" value="TRM5"/>
    <property type="match status" value="1"/>
</dbReference>
<dbReference type="InterPro" id="IPR030382">
    <property type="entry name" value="MeTrfase_TRM5/TYW2"/>
</dbReference>
<dbReference type="InterPro" id="IPR029063">
    <property type="entry name" value="SAM-dependent_MTases_sf"/>
</dbReference>
<dbReference type="InterPro" id="IPR056743">
    <property type="entry name" value="TRM5-TYW2-like_MTfase"/>
</dbReference>
<dbReference type="InterPro" id="IPR056744">
    <property type="entry name" value="TRM5/TYW2-like_N"/>
</dbReference>
<dbReference type="InterPro" id="IPR025792">
    <property type="entry name" value="tRNA_Gua_MeTrfase_euk"/>
</dbReference>
<dbReference type="PANTHER" id="PTHR23245:SF36">
    <property type="entry name" value="TRNA (GUANINE(37)-N1)-METHYLTRANSFERASE"/>
    <property type="match status" value="1"/>
</dbReference>
<dbReference type="PANTHER" id="PTHR23245">
    <property type="entry name" value="TRNA METHYLTRANSFERASE"/>
    <property type="match status" value="1"/>
</dbReference>
<dbReference type="Pfam" id="PF02475">
    <property type="entry name" value="TRM5-TYW2_MTfase"/>
    <property type="match status" value="1"/>
</dbReference>
<dbReference type="Pfam" id="PF25133">
    <property type="entry name" value="TYW2_N_2"/>
    <property type="match status" value="1"/>
</dbReference>
<dbReference type="SUPFAM" id="SSF53335">
    <property type="entry name" value="S-adenosyl-L-methionine-dependent methyltransferases"/>
    <property type="match status" value="1"/>
</dbReference>
<dbReference type="PROSITE" id="PS51684">
    <property type="entry name" value="SAM_MT_TRM5_TYW2"/>
    <property type="match status" value="1"/>
</dbReference>
<name>TRM5_ENCCU</name>
<gene>
    <name evidence="1" type="primary">TRM5</name>
    <name type="ordered locus">ECU04_0620</name>
</gene>
<organism>
    <name type="scientific">Encephalitozoon cuniculi (strain GB-M1)</name>
    <name type="common">Microsporidian parasite</name>
    <dbReference type="NCBI Taxonomy" id="284813"/>
    <lineage>
        <taxon>Eukaryota</taxon>
        <taxon>Fungi</taxon>
        <taxon>Fungi incertae sedis</taxon>
        <taxon>Microsporidia</taxon>
        <taxon>Unikaryonidae</taxon>
        <taxon>Encephalitozoon</taxon>
    </lineage>
</organism>
<reference key="1">
    <citation type="journal article" date="2001" name="Nature">
        <title>Genome sequence and gene compaction of the eukaryote parasite Encephalitozoon cuniculi.</title>
        <authorList>
            <person name="Katinka M.D."/>
            <person name="Duprat S."/>
            <person name="Cornillot E."/>
            <person name="Metenier G."/>
            <person name="Thomarat F."/>
            <person name="Prensier G."/>
            <person name="Barbe V."/>
            <person name="Peyretaillade E."/>
            <person name="Brottier P."/>
            <person name="Wincker P."/>
            <person name="Delbac F."/>
            <person name="El Alaoui H."/>
            <person name="Peyret P."/>
            <person name="Saurin W."/>
            <person name="Gouy M."/>
            <person name="Weissenbach J."/>
            <person name="Vivares C.P."/>
        </authorList>
    </citation>
    <scope>NUCLEOTIDE SEQUENCE [LARGE SCALE GENOMIC DNA]</scope>
    <source>
        <strain>GB-M1</strain>
    </source>
</reference>